<feature type="chain" id="PRO_0000112164" description="ATP synthase subunit c">
    <location>
        <begin position="1"/>
        <end position="79"/>
    </location>
</feature>
<feature type="transmembrane region" description="Helical" evidence="2">
    <location>
        <begin position="11"/>
        <end position="31"/>
    </location>
</feature>
<feature type="transmembrane region" description="Helical" evidence="2">
    <location>
        <begin position="53"/>
        <end position="73"/>
    </location>
</feature>
<feature type="site" description="Reversibly protonated during proton transport" evidence="2">
    <location>
        <position position="61"/>
    </location>
</feature>
<feature type="modified residue" description="N-formylmethionine" evidence="1">
    <location>
        <position position="1"/>
    </location>
</feature>
<name>ATPL_SHIFL</name>
<evidence type="ECO:0000250" key="1"/>
<evidence type="ECO:0000255" key="2">
    <source>
        <dbReference type="HAMAP-Rule" id="MF_01396"/>
    </source>
</evidence>
<comment type="function">
    <text evidence="2">F(1)F(0) ATP synthase produces ATP from ADP in the presence of a proton or sodium gradient. F-type ATPases consist of two structural domains, F(1) containing the extramembraneous catalytic core and F(0) containing the membrane proton channel, linked together by a central stalk and a peripheral stalk. During catalysis, ATP synthesis in the catalytic domain of F(1) is coupled via a rotary mechanism of the central stalk subunits to proton translocation.</text>
</comment>
<comment type="function">
    <text evidence="2">Key component of the F(0) channel; it plays a direct role in translocation across the membrane. A homomeric c-ring of between 10-14 subunits forms the central stalk rotor element with the F(1) delta and epsilon subunits.</text>
</comment>
<comment type="subunit">
    <text evidence="2">F-type ATPases have 2 components, F(1) - the catalytic core - and F(0) - the membrane proton channel. F(1) has five subunits: alpha(3), beta(3), gamma(1), delta(1), epsilon(1). F(0) has three main subunits: a(1), b(2) and c(10-14). The alpha and beta chains form an alternating ring which encloses part of the gamma chain. F(1) is attached to F(0) by a central stalk formed by the gamma and epsilon chains, while a peripheral stalk is formed by the delta and b chains.</text>
</comment>
<comment type="subcellular location">
    <subcellularLocation>
        <location evidence="2">Cell inner membrane</location>
        <topology evidence="2">Multi-pass membrane protein</topology>
    </subcellularLocation>
</comment>
<comment type="miscellaneous">
    <text evidence="1">Dicyclohexylcarbodiimide (DCDD) binding to the active aspartate residue inhibits ATPase in vitro.</text>
</comment>
<comment type="similarity">
    <text evidence="2">Belongs to the ATPase C chain family.</text>
</comment>
<gene>
    <name evidence="2" type="primary">atpE</name>
    <name type="ordered locus">SF3817</name>
    <name type="ordered locus">S3951</name>
</gene>
<accession>P68705</accession>
<accession>P00844</accession>
<protein>
    <recommendedName>
        <fullName evidence="2">ATP synthase subunit c</fullName>
    </recommendedName>
    <alternativeName>
        <fullName evidence="2">ATP synthase F(0) sector subunit c</fullName>
    </alternativeName>
    <alternativeName>
        <fullName evidence="2">F-type ATPase subunit c</fullName>
        <shortName evidence="2">F-ATPase subunit c</shortName>
    </alternativeName>
    <alternativeName>
        <fullName evidence="2">Lipid-binding protein</fullName>
    </alternativeName>
</protein>
<reference key="1">
    <citation type="journal article" date="2002" name="Nucleic Acids Res.">
        <title>Genome sequence of Shigella flexneri 2a: insights into pathogenicity through comparison with genomes of Escherichia coli K12 and O157.</title>
        <authorList>
            <person name="Jin Q."/>
            <person name="Yuan Z."/>
            <person name="Xu J."/>
            <person name="Wang Y."/>
            <person name="Shen Y."/>
            <person name="Lu W."/>
            <person name="Wang J."/>
            <person name="Liu H."/>
            <person name="Yang J."/>
            <person name="Yang F."/>
            <person name="Zhang X."/>
            <person name="Zhang J."/>
            <person name="Yang G."/>
            <person name="Wu H."/>
            <person name="Qu D."/>
            <person name="Dong J."/>
            <person name="Sun L."/>
            <person name="Xue Y."/>
            <person name="Zhao A."/>
            <person name="Gao Y."/>
            <person name="Zhu J."/>
            <person name="Kan B."/>
            <person name="Ding K."/>
            <person name="Chen S."/>
            <person name="Cheng H."/>
            <person name="Yao Z."/>
            <person name="He B."/>
            <person name="Chen R."/>
            <person name="Ma D."/>
            <person name="Qiang B."/>
            <person name="Wen Y."/>
            <person name="Hou Y."/>
            <person name="Yu J."/>
        </authorList>
    </citation>
    <scope>NUCLEOTIDE SEQUENCE [LARGE SCALE GENOMIC DNA]</scope>
    <source>
        <strain>301 / Serotype 2a</strain>
    </source>
</reference>
<reference key="2">
    <citation type="journal article" date="2003" name="Infect. Immun.">
        <title>Complete genome sequence and comparative genomics of Shigella flexneri serotype 2a strain 2457T.</title>
        <authorList>
            <person name="Wei J."/>
            <person name="Goldberg M.B."/>
            <person name="Burland V."/>
            <person name="Venkatesan M.M."/>
            <person name="Deng W."/>
            <person name="Fournier G."/>
            <person name="Mayhew G.F."/>
            <person name="Plunkett G. III"/>
            <person name="Rose D.J."/>
            <person name="Darling A."/>
            <person name="Mau B."/>
            <person name="Perna N.T."/>
            <person name="Payne S.M."/>
            <person name="Runyen-Janecky L.J."/>
            <person name="Zhou S."/>
            <person name="Schwartz D.C."/>
            <person name="Blattner F.R."/>
        </authorList>
    </citation>
    <scope>NUCLEOTIDE SEQUENCE [LARGE SCALE GENOMIC DNA]</scope>
    <source>
        <strain>ATCC 700930 / 2457T / Serotype 2a</strain>
    </source>
</reference>
<sequence length="79" mass="8256">MENLNMDLLYMAAAVMMGLAAIGAAIGIGILGGKFLEGAARQPDLIPLLRTQFFIVMGLVDAIPMIAVGLGLYVMFAVA</sequence>
<keyword id="KW-0066">ATP synthesis</keyword>
<keyword id="KW-0997">Cell inner membrane</keyword>
<keyword id="KW-1003">Cell membrane</keyword>
<keyword id="KW-0138">CF(0)</keyword>
<keyword id="KW-0291">Formylation</keyword>
<keyword id="KW-0375">Hydrogen ion transport</keyword>
<keyword id="KW-0406">Ion transport</keyword>
<keyword id="KW-0446">Lipid-binding</keyword>
<keyword id="KW-0472">Membrane</keyword>
<keyword id="KW-1185">Reference proteome</keyword>
<keyword id="KW-0812">Transmembrane</keyword>
<keyword id="KW-1133">Transmembrane helix</keyword>
<keyword id="KW-0813">Transport</keyword>
<dbReference type="EMBL" id="AE005674">
    <property type="protein sequence ID" value="AAN45257.1"/>
    <property type="molecule type" value="Genomic_DNA"/>
</dbReference>
<dbReference type="EMBL" id="AE014073">
    <property type="protein sequence ID" value="AAP18940.1"/>
    <property type="molecule type" value="Genomic_DNA"/>
</dbReference>
<dbReference type="RefSeq" id="NP_709550.1">
    <property type="nucleotide sequence ID" value="NC_004337.2"/>
</dbReference>
<dbReference type="RefSeq" id="WP_000429386.1">
    <property type="nucleotide sequence ID" value="NZ_WPGW01000050.1"/>
</dbReference>
<dbReference type="SMR" id="P68705"/>
<dbReference type="STRING" id="198214.SF3817"/>
<dbReference type="PaxDb" id="198214-SF3817"/>
<dbReference type="GeneID" id="1026094"/>
<dbReference type="GeneID" id="98390858"/>
<dbReference type="KEGG" id="sfl:SF3817"/>
<dbReference type="KEGG" id="sfx:S3951"/>
<dbReference type="PATRIC" id="fig|198214.7.peg.4504"/>
<dbReference type="HOGENOM" id="CLU_148047_1_0_6"/>
<dbReference type="Proteomes" id="UP000001006">
    <property type="component" value="Chromosome"/>
</dbReference>
<dbReference type="Proteomes" id="UP000002673">
    <property type="component" value="Chromosome"/>
</dbReference>
<dbReference type="GO" id="GO:0005886">
    <property type="term" value="C:plasma membrane"/>
    <property type="evidence" value="ECO:0007669"/>
    <property type="project" value="UniProtKB-SubCell"/>
</dbReference>
<dbReference type="GO" id="GO:0045259">
    <property type="term" value="C:proton-transporting ATP synthase complex"/>
    <property type="evidence" value="ECO:0007669"/>
    <property type="project" value="UniProtKB-KW"/>
</dbReference>
<dbReference type="GO" id="GO:0033177">
    <property type="term" value="C:proton-transporting two-sector ATPase complex, proton-transporting domain"/>
    <property type="evidence" value="ECO:0007669"/>
    <property type="project" value="InterPro"/>
</dbReference>
<dbReference type="GO" id="GO:0008289">
    <property type="term" value="F:lipid binding"/>
    <property type="evidence" value="ECO:0007669"/>
    <property type="project" value="UniProtKB-KW"/>
</dbReference>
<dbReference type="GO" id="GO:0046933">
    <property type="term" value="F:proton-transporting ATP synthase activity, rotational mechanism"/>
    <property type="evidence" value="ECO:0007669"/>
    <property type="project" value="UniProtKB-UniRule"/>
</dbReference>
<dbReference type="CDD" id="cd18185">
    <property type="entry name" value="ATP-synt_Fo_c_ATPE"/>
    <property type="match status" value="1"/>
</dbReference>
<dbReference type="FunFam" id="1.20.20.10:FF:000002">
    <property type="entry name" value="ATP synthase subunit c"/>
    <property type="match status" value="1"/>
</dbReference>
<dbReference type="Gene3D" id="1.20.20.10">
    <property type="entry name" value="F1F0 ATP synthase subunit C"/>
    <property type="match status" value="1"/>
</dbReference>
<dbReference type="HAMAP" id="MF_01396">
    <property type="entry name" value="ATP_synth_c_bact"/>
    <property type="match status" value="1"/>
</dbReference>
<dbReference type="InterPro" id="IPR005953">
    <property type="entry name" value="ATP_synth_csu_bac/chlpt"/>
</dbReference>
<dbReference type="InterPro" id="IPR000454">
    <property type="entry name" value="ATP_synth_F0_csu"/>
</dbReference>
<dbReference type="InterPro" id="IPR020537">
    <property type="entry name" value="ATP_synth_F0_csu_DDCD_BS"/>
</dbReference>
<dbReference type="InterPro" id="IPR038662">
    <property type="entry name" value="ATP_synth_F0_csu_sf"/>
</dbReference>
<dbReference type="InterPro" id="IPR002379">
    <property type="entry name" value="ATPase_proteolipid_c-like_dom"/>
</dbReference>
<dbReference type="InterPro" id="IPR035921">
    <property type="entry name" value="F/V-ATP_Csub_sf"/>
</dbReference>
<dbReference type="NCBIfam" id="TIGR01260">
    <property type="entry name" value="ATP_synt_c"/>
    <property type="match status" value="1"/>
</dbReference>
<dbReference type="NCBIfam" id="NF005363">
    <property type="entry name" value="PRK06876.1"/>
    <property type="match status" value="1"/>
</dbReference>
<dbReference type="Pfam" id="PF00137">
    <property type="entry name" value="ATP-synt_C"/>
    <property type="match status" value="1"/>
</dbReference>
<dbReference type="PRINTS" id="PR00124">
    <property type="entry name" value="ATPASEC"/>
</dbReference>
<dbReference type="SUPFAM" id="SSF81333">
    <property type="entry name" value="F1F0 ATP synthase subunit C"/>
    <property type="match status" value="1"/>
</dbReference>
<dbReference type="PROSITE" id="PS00605">
    <property type="entry name" value="ATPASE_C"/>
    <property type="match status" value="1"/>
</dbReference>
<proteinExistence type="inferred from homology"/>
<organism>
    <name type="scientific">Shigella flexneri</name>
    <dbReference type="NCBI Taxonomy" id="623"/>
    <lineage>
        <taxon>Bacteria</taxon>
        <taxon>Pseudomonadati</taxon>
        <taxon>Pseudomonadota</taxon>
        <taxon>Gammaproteobacteria</taxon>
        <taxon>Enterobacterales</taxon>
        <taxon>Enterobacteriaceae</taxon>
        <taxon>Shigella</taxon>
    </lineage>
</organism>